<keyword id="KW-0175">Coiled coil</keyword>
<keyword id="KW-1185">Reference proteome</keyword>
<accession>Q5UQM9</accession>
<sequence>MSKTSRSRINRRSIDNNICINSSCNKKKFPDNVVYRNKEKKIIHEECKICFNKRAKLYRERNKAKLKEKQHKWYHKGGGKEHKKLYDKINLEKSNMRDKNRYATDLNFRMKKILRSRLYKVTKKGQYSKKMTEYLGIDINIFRQWIEFQFDENMSWENQGSYWHIDHVIPCKSFDLTEEEEISQCFNWENMRPLEGIENDIKNDKILPDEIKKHKKLVLKFKKKINL</sequence>
<name>YL426_MIMIV</name>
<evidence type="ECO:0000255" key="1"/>
<evidence type="ECO:0000305" key="2"/>
<proteinExistence type="inferred from homology"/>
<organism>
    <name type="scientific">Acanthamoeba polyphaga mimivirus</name>
    <name type="common">APMV</name>
    <dbReference type="NCBI Taxonomy" id="212035"/>
    <lineage>
        <taxon>Viruses</taxon>
        <taxon>Varidnaviria</taxon>
        <taxon>Bamfordvirae</taxon>
        <taxon>Nucleocytoviricota</taxon>
        <taxon>Megaviricetes</taxon>
        <taxon>Imitervirales</taxon>
        <taxon>Mimiviridae</taxon>
        <taxon>Megamimivirinae</taxon>
        <taxon>Mimivirus</taxon>
        <taxon>Mimivirus bradfordmassiliense</taxon>
    </lineage>
</organism>
<protein>
    <recommendedName>
        <fullName>Uncharacterized protein L426</fullName>
    </recommendedName>
</protein>
<organismHost>
    <name type="scientific">Acanthamoeba polyphaga</name>
    <name type="common">Amoeba</name>
    <dbReference type="NCBI Taxonomy" id="5757"/>
</organismHost>
<feature type="chain" id="PRO_0000071281" description="Uncharacterized protein L426">
    <location>
        <begin position="1"/>
        <end position="227"/>
    </location>
</feature>
<feature type="coiled-coil region" evidence="1">
    <location>
        <begin position="52"/>
        <end position="100"/>
    </location>
</feature>
<comment type="similarity">
    <text evidence="2">Belongs to the mimivirus L246/L426 family.</text>
</comment>
<gene>
    <name type="ordered locus">MIMI_L426</name>
</gene>
<reference key="1">
    <citation type="journal article" date="2004" name="Science">
        <title>The 1.2-megabase genome sequence of Mimivirus.</title>
        <authorList>
            <person name="Raoult D."/>
            <person name="Audic S."/>
            <person name="Robert C."/>
            <person name="Abergel C."/>
            <person name="Renesto P."/>
            <person name="Ogata H."/>
            <person name="La Scola B."/>
            <person name="Susan M."/>
            <person name="Claverie J.-M."/>
        </authorList>
    </citation>
    <scope>NUCLEOTIDE SEQUENCE [LARGE SCALE GENOMIC DNA]</scope>
    <source>
        <strain>Rowbotham-Bradford</strain>
    </source>
</reference>
<dbReference type="EMBL" id="AY653733">
    <property type="protein sequence ID" value="AAV50695.1"/>
    <property type="molecule type" value="Genomic_DNA"/>
</dbReference>
<dbReference type="KEGG" id="vg:9925047"/>
<dbReference type="OrthoDB" id="23044at10239"/>
<dbReference type="Proteomes" id="UP000001134">
    <property type="component" value="Genome"/>
</dbReference>